<dbReference type="EMBL" id="AY830714">
    <property type="protein sequence ID" value="AAX21411.1"/>
    <property type="molecule type" value="mRNA"/>
</dbReference>
<dbReference type="EMBL" id="AK026839">
    <property type="protein sequence ID" value="BAB15569.1"/>
    <property type="status" value="ALT_FRAME"/>
    <property type="molecule type" value="mRNA"/>
</dbReference>
<dbReference type="EMBL" id="AK298076">
    <property type="protein sequence ID" value="BAG60364.1"/>
    <property type="status" value="ALT_INIT"/>
    <property type="molecule type" value="mRNA"/>
</dbReference>
<dbReference type="EMBL" id="AK303588">
    <property type="protein sequence ID" value="BAG64604.1"/>
    <property type="molecule type" value="mRNA"/>
</dbReference>
<dbReference type="EMBL" id="AC024887">
    <property type="status" value="NOT_ANNOTATED_CDS"/>
    <property type="molecule type" value="Genomic_DNA"/>
</dbReference>
<dbReference type="EMBL" id="BC017064">
    <property type="protein sequence ID" value="AAH17064.1"/>
    <property type="status" value="ALT_INIT"/>
    <property type="molecule type" value="mRNA"/>
</dbReference>
<dbReference type="CCDS" id="CCDS46887.1">
    <molecule id="Q5BVD1-1"/>
</dbReference>
<dbReference type="CCDS" id="CCDS54620.1">
    <molecule id="Q5BVD1-3"/>
</dbReference>
<dbReference type="RefSeq" id="NP_001165218.1">
    <molecule id="Q5BVD1-3"/>
    <property type="nucleotide sequence ID" value="NM_001171747.1"/>
</dbReference>
<dbReference type="RefSeq" id="NP_078892.2">
    <molecule id="Q5BVD1-1"/>
    <property type="nucleotide sequence ID" value="NM_024616.2"/>
</dbReference>
<dbReference type="SMR" id="Q5BVD1"/>
<dbReference type="BioGRID" id="122794">
    <property type="interactions" value="306"/>
</dbReference>
<dbReference type="FunCoup" id="Q5BVD1">
    <property type="interactions" value="972"/>
</dbReference>
<dbReference type="IntAct" id="Q5BVD1">
    <property type="interactions" value="295"/>
</dbReference>
<dbReference type="STRING" id="9606.ENSP00000399392"/>
<dbReference type="iPTMnet" id="Q5BVD1"/>
<dbReference type="PhosphoSitePlus" id="Q5BVD1"/>
<dbReference type="BioMuta" id="C3orf52"/>
<dbReference type="DMDM" id="317373287"/>
<dbReference type="jPOST" id="Q5BVD1"/>
<dbReference type="MassIVE" id="Q5BVD1"/>
<dbReference type="PaxDb" id="9606-ENSP00000399392"/>
<dbReference type="PeptideAtlas" id="Q5BVD1"/>
<dbReference type="ProteomicsDB" id="62722">
    <molecule id="Q5BVD1-1"/>
</dbReference>
<dbReference type="ProteomicsDB" id="62723">
    <molecule id="Q5BVD1-2"/>
</dbReference>
<dbReference type="ProteomicsDB" id="62724">
    <molecule id="Q5BVD1-3"/>
</dbReference>
<dbReference type="Antibodypedia" id="2367">
    <property type="antibodies" value="21 antibodies from 9 providers"/>
</dbReference>
<dbReference type="DNASU" id="79669"/>
<dbReference type="Ensembl" id="ENST00000264848.10">
    <molecule id="Q5BVD1-1"/>
    <property type="protein sequence ID" value="ENSP00000264848.5"/>
    <property type="gene ID" value="ENSG00000114529.13"/>
</dbReference>
<dbReference type="Ensembl" id="ENST00000431717.6">
    <molecule id="Q5BVD1-3"/>
    <property type="protein sequence ID" value="ENSP00000399392.2"/>
    <property type="gene ID" value="ENSG00000114529.13"/>
</dbReference>
<dbReference type="Ensembl" id="ENST00000480282.5">
    <molecule id="Q5BVD1-2"/>
    <property type="protein sequence ID" value="ENSP00000420539.1"/>
    <property type="gene ID" value="ENSG00000114529.13"/>
</dbReference>
<dbReference type="GeneID" id="79669"/>
<dbReference type="KEGG" id="hsa:79669"/>
<dbReference type="MANE-Select" id="ENST00000264848.10">
    <property type="protein sequence ID" value="ENSP00000264848.5"/>
    <property type="RefSeq nucleotide sequence ID" value="NM_024616.3"/>
    <property type="RefSeq protein sequence ID" value="NP_078892.3"/>
</dbReference>
<dbReference type="UCSC" id="uc003dyq.5">
    <molecule id="Q5BVD1-1"/>
    <property type="organism name" value="human"/>
</dbReference>
<dbReference type="AGR" id="HGNC:26255"/>
<dbReference type="CTD" id="79669"/>
<dbReference type="DisGeNET" id="79669"/>
<dbReference type="GeneCards" id="C3orf52"/>
<dbReference type="HGNC" id="HGNC:26255">
    <property type="gene designation" value="C3orf52"/>
</dbReference>
<dbReference type="HPA" id="ENSG00000114529">
    <property type="expression patterns" value="Tissue enhanced (pancreas, skin)"/>
</dbReference>
<dbReference type="MalaCards" id="C3orf52"/>
<dbReference type="MIM" id="611956">
    <property type="type" value="gene"/>
</dbReference>
<dbReference type="MIM" id="620177">
    <property type="type" value="phenotype"/>
</dbReference>
<dbReference type="neXtProt" id="NX_Q5BVD1"/>
<dbReference type="OpenTargets" id="ENSG00000114529"/>
<dbReference type="PharmGKB" id="PA143485328"/>
<dbReference type="VEuPathDB" id="HostDB:ENSG00000114529"/>
<dbReference type="eggNOG" id="ENOG502S6A0">
    <property type="taxonomic scope" value="Eukaryota"/>
</dbReference>
<dbReference type="GeneTree" id="ENSGT00390000014574"/>
<dbReference type="HOGENOM" id="CLU_1815206_0_0_1"/>
<dbReference type="InParanoid" id="Q5BVD1"/>
<dbReference type="OMA" id="GFMKYMM"/>
<dbReference type="OrthoDB" id="8879801at2759"/>
<dbReference type="PAN-GO" id="Q5BVD1">
    <property type="GO annotations" value="0 GO annotations based on evolutionary models"/>
</dbReference>
<dbReference type="PhylomeDB" id="Q5BVD1"/>
<dbReference type="TreeFam" id="TF330754"/>
<dbReference type="PathwayCommons" id="Q5BVD1"/>
<dbReference type="SignaLink" id="Q5BVD1"/>
<dbReference type="BioGRID-ORCS" id="79669">
    <property type="hits" value="10 hits in 1151 CRISPR screens"/>
</dbReference>
<dbReference type="GenomeRNAi" id="79669"/>
<dbReference type="Pharos" id="Q5BVD1">
    <property type="development level" value="Tdark"/>
</dbReference>
<dbReference type="PRO" id="PR:Q5BVD1"/>
<dbReference type="Proteomes" id="UP000005640">
    <property type="component" value="Chromosome 3"/>
</dbReference>
<dbReference type="RNAct" id="Q5BVD1">
    <property type="molecule type" value="protein"/>
</dbReference>
<dbReference type="Bgee" id="ENSG00000114529">
    <property type="expression patterns" value="Expressed in skin of leg and 97 other cell types or tissues"/>
</dbReference>
<dbReference type="ExpressionAtlas" id="Q5BVD1">
    <property type="expression patterns" value="baseline and differential"/>
</dbReference>
<dbReference type="GO" id="GO:0005783">
    <property type="term" value="C:endoplasmic reticulum"/>
    <property type="evidence" value="ECO:0007669"/>
    <property type="project" value="UniProtKB-SubCell"/>
</dbReference>
<dbReference type="GO" id="GO:0005886">
    <property type="term" value="C:plasma membrane"/>
    <property type="evidence" value="ECO:0000314"/>
    <property type="project" value="UniProtKB"/>
</dbReference>
<dbReference type="InterPro" id="IPR033223">
    <property type="entry name" value="TTMP"/>
</dbReference>
<dbReference type="PANTHER" id="PTHR14636">
    <property type="entry name" value="TPA-INDUCED TRANSMEMBRANE PROTEIN"/>
    <property type="match status" value="1"/>
</dbReference>
<dbReference type="PANTHER" id="PTHR14636:SF1">
    <property type="entry name" value="TPA-INDUCED TRANSMEMBRANE PROTEIN"/>
    <property type="match status" value="1"/>
</dbReference>
<feature type="chain" id="PRO_0000248024" description="TPA-induced transmembrane protein">
    <location>
        <begin position="1"/>
        <end position="217"/>
    </location>
</feature>
<feature type="transmembrane region" description="Helical" evidence="1">
    <location>
        <begin position="66"/>
        <end position="86"/>
    </location>
</feature>
<feature type="region of interest" description="Disordered" evidence="2">
    <location>
        <begin position="1"/>
        <end position="37"/>
    </location>
</feature>
<feature type="splice variant" id="VSP_036120" description="In isoform 2." evidence="8">
    <original>LTDVYSTSPSLGRYFTSVEIVDFSGENATVTYDLQFGVPSDDENFMKYMMSEELVLGILLQDFRDQNIPGCESLGLDPTSLLLYE</original>
    <variation>EVGLKPNPEALVGFE</variation>
    <location>
        <begin position="133"/>
        <end position="217"/>
    </location>
</feature>
<feature type="splice variant" id="VSP_036121" description="In isoform 3." evidence="8">
    <original>LTDVYSTSPSLGRYFTSVEIVDFSGENATVTYDLQFGVPSDDENFMKYMMSEELVLGILLQDFRDQNIPGCESLGLDPTSLLLYE</original>
    <variation>NEVMEAGLCLKAVLYQVLEMKGIHSVLQKRFCGLIQKHQQHQRGGDSFLSRFYSLALSPVKQLPSTASAGSSLDKGRKPARVGAIGSAGMSHCWRSLVFCLFLFCFVLFFETGSRSVA</variation>
    <location>
        <begin position="133"/>
        <end position="217"/>
    </location>
</feature>
<feature type="sequence variant" id="VAR_087942" description="In HYPT15; loss of expression in homozygous patient cells." evidence="6">
    <location>
        <begin position="12"/>
        <end position="217"/>
    </location>
</feature>
<feature type="sequence variant" id="VAR_059736" description="In dbSNP:rs16859172.">
    <original>L</original>
    <variation>P</variation>
    <location>
        <position position="66"/>
    </location>
</feature>
<feature type="sequence variant" id="VAR_027203" description="In dbSNP:rs16859190.">
    <original>I</original>
    <variation>V</variation>
    <location>
        <position position="111"/>
    </location>
</feature>
<feature type="sequence variant" id="VAR_027204" description="In dbSNP:rs340167." evidence="3 4 5">
    <original>G</original>
    <variation>S</variation>
    <location>
        <position position="144"/>
    </location>
</feature>
<feature type="sequence variant" id="VAR_087943" description="In HYPT15; reduced expression in homozygous patient cells; does not localize to the cell membrane; decreased interaction with LIPH; results in strongly decreased LIPH-mediated synthesis of 2-acyl lysophosphatidic acid." evidence="6">
    <location>
        <begin position="164"/>
        <end position="217"/>
    </location>
</feature>
<feature type="sequence conflict" description="In Ref. 2; BAB15569." evidence="9" ref="2">
    <original>M</original>
    <variation>V</variation>
    <location>
        <position position="1"/>
    </location>
</feature>
<feature type="sequence conflict" description="In Ref. 2; BAB15569." evidence="9" ref="2">
    <original>E</original>
    <variation>K</variation>
    <location>
        <position position="123"/>
    </location>
</feature>
<organism>
    <name type="scientific">Homo sapiens</name>
    <name type="common">Human</name>
    <dbReference type="NCBI Taxonomy" id="9606"/>
    <lineage>
        <taxon>Eukaryota</taxon>
        <taxon>Metazoa</taxon>
        <taxon>Chordata</taxon>
        <taxon>Craniata</taxon>
        <taxon>Vertebrata</taxon>
        <taxon>Euteleostomi</taxon>
        <taxon>Mammalia</taxon>
        <taxon>Eutheria</taxon>
        <taxon>Euarchontoglires</taxon>
        <taxon>Primates</taxon>
        <taxon>Haplorrhini</taxon>
        <taxon>Catarrhini</taxon>
        <taxon>Hominidae</taxon>
        <taxon>Homo</taxon>
    </lineage>
</organism>
<accession>Q5BVD1</accession>
<accession>B4DNV2</accession>
<accession>B4E0Z2</accession>
<accession>Q96AJ4</accession>
<accession>Q9H5Q1</accession>
<name>TTMP_HUMAN</name>
<comment type="function">
    <text evidence="6">Has a role in LIPH-mediated synthesis of 2-acyl lysophosphatidic acid (LPA). LPA is a bioactive lipid mediator involved in different biological processes, and necessary to promote hair formation and growth.</text>
</comment>
<comment type="subunit">
    <text evidence="6">Interacts with LIPH.</text>
</comment>
<comment type="interaction">
    <interactant intactId="EBI-10243654">
        <id>Q5BVD1</id>
    </interactant>
    <interactant intactId="EBI-17979264">
        <id>Q86Y34</id>
        <label>ADGRG3</label>
    </interactant>
    <organismsDiffer>false</organismsDiffer>
    <experiments>3</experiments>
</comment>
<comment type="interaction">
    <interactant intactId="EBI-10243654">
        <id>Q5BVD1</id>
    </interactant>
    <interactant intactId="EBI-1646426">
        <id>Q15109</id>
        <label>AGER</label>
    </interactant>
    <organismsDiffer>false</organismsDiffer>
    <experiments>3</experiments>
</comment>
<comment type="interaction">
    <interactant intactId="EBI-10243654">
        <id>Q5BVD1</id>
    </interactant>
    <interactant intactId="EBI-12078468">
        <id>Q8IVF2-3</id>
        <label>AHNAK2</label>
    </interactant>
    <organismsDiffer>false</organismsDiffer>
    <experiments>3</experiments>
</comment>
<comment type="interaction">
    <interactant intactId="EBI-10243654">
        <id>Q5BVD1</id>
    </interactant>
    <interactant intactId="EBI-19125216">
        <id>Q86WK6</id>
        <label>AMIGO1</label>
    </interactant>
    <organismsDiffer>false</organismsDiffer>
    <experiments>3</experiments>
</comment>
<comment type="interaction">
    <interactant intactId="EBI-10243654">
        <id>Q5BVD1</id>
    </interactant>
    <interactant intactId="EBI-13059134">
        <id>Q13520</id>
        <label>AQP6</label>
    </interactant>
    <organismsDiffer>false</organismsDiffer>
    <experiments>3</experiments>
</comment>
<comment type="interaction">
    <interactant intactId="EBI-10243654">
        <id>Q5BVD1</id>
    </interactant>
    <interactant intactId="EBI-12894731">
        <id>Q9UN42</id>
        <label>ATP1B4</label>
    </interactant>
    <organismsDiffer>false</organismsDiffer>
    <experiments>3</experiments>
</comment>
<comment type="interaction">
    <interactant intactId="EBI-10243654">
        <id>Q5BVD1</id>
    </interactant>
    <interactant intactId="EBI-700794">
        <id>Q13323</id>
        <label>BIK</label>
    </interactant>
    <organismsDiffer>false</organismsDiffer>
    <experiments>3</experiments>
</comment>
<comment type="interaction">
    <interactant intactId="EBI-10243654">
        <id>Q5BVD1</id>
    </interactant>
    <interactant intactId="EBI-953695">
        <id>O00585</id>
        <label>CCL21</label>
    </interactant>
    <organismsDiffer>false</organismsDiffer>
    <experiments>3</experiments>
</comment>
<comment type="interaction">
    <interactant intactId="EBI-10243654">
        <id>Q5BVD1</id>
    </interactant>
    <interactant intactId="EBI-7783416">
        <id>Q9Y258</id>
        <label>CCL26</label>
    </interactant>
    <organismsDiffer>false</organismsDiffer>
    <experiments>3</experiments>
</comment>
<comment type="interaction">
    <interactant intactId="EBI-10243654">
        <id>Q5BVD1</id>
    </interactant>
    <interactant intactId="EBI-3906571">
        <id>P20138</id>
        <label>CD33</label>
    </interactant>
    <organismsDiffer>false</organismsDiffer>
    <experiments>3</experiments>
</comment>
<comment type="interaction">
    <interactant intactId="EBI-10243654">
        <id>Q5BVD1</id>
    </interactant>
    <interactant intactId="EBI-11599701">
        <id>Q8NET6</id>
        <label>CHST13</label>
    </interactant>
    <organismsDiffer>false</organismsDiffer>
    <experiments>3</experiments>
</comment>
<comment type="interaction">
    <interactant intactId="EBI-10243654">
        <id>Q5BVD1</id>
    </interactant>
    <interactant intactId="EBI-740744">
        <id>O95471</id>
        <label>CLDN7</label>
    </interactant>
    <organismsDiffer>false</organismsDiffer>
    <experiments>3</experiments>
</comment>
<comment type="interaction">
    <interactant intactId="EBI-10243654">
        <id>Q5BVD1</id>
    </interactant>
    <interactant intactId="EBI-2873246">
        <id>Q8IUN9</id>
        <label>CLEC10A</label>
    </interactant>
    <organismsDiffer>false</organismsDiffer>
    <experiments>3</experiments>
</comment>
<comment type="interaction">
    <interactant intactId="EBI-10243654">
        <id>Q5BVD1</id>
    </interactant>
    <interactant intactId="EBI-10696063">
        <id>O75829-2</id>
        <label>CNMD</label>
    </interactant>
    <organismsDiffer>false</organismsDiffer>
    <experiments>3</experiments>
</comment>
<comment type="interaction">
    <interactant intactId="EBI-10243654">
        <id>Q5BVD1</id>
    </interactant>
    <interactant intactId="EBI-18013275">
        <id>Q7Z7G2</id>
        <label>CPLX4</label>
    </interactant>
    <organismsDiffer>false</organismsDiffer>
    <experiments>3</experiments>
</comment>
<comment type="interaction">
    <interactant intactId="EBI-10243654">
        <id>Q5BVD1</id>
    </interactant>
    <interactant intactId="EBI-724515">
        <id>O95424</id>
        <label>DEXI</label>
    </interactant>
    <organismsDiffer>false</organismsDiffer>
    <experiments>3</experiments>
</comment>
<comment type="interaction">
    <interactant intactId="EBI-10243654">
        <id>Q5BVD1</id>
    </interactant>
    <interactant intactId="EBI-781551">
        <id>Q9Y282</id>
        <label>ERGIC3</label>
    </interactant>
    <organismsDiffer>false</organismsDiffer>
    <experiments>3</experiments>
</comment>
<comment type="interaction">
    <interactant intactId="EBI-10243654">
        <id>Q5BVD1</id>
    </interactant>
    <interactant intactId="EBI-946830">
        <id>P30040</id>
        <label>ERP29</label>
    </interactant>
    <organismsDiffer>false</organismsDiffer>
    <experiments>3</experiments>
</comment>
<comment type="interaction">
    <interactant intactId="EBI-10243654">
        <id>Q5BVD1</id>
    </interactant>
    <interactant intactId="EBI-4314670">
        <id>Q96AP7</id>
        <label>ESAM</label>
    </interactant>
    <organismsDiffer>false</organismsDiffer>
    <experiments>3</experiments>
</comment>
<comment type="interaction">
    <interactant intactId="EBI-10243654">
        <id>Q5BVD1</id>
    </interactant>
    <interactant intactId="EBI-18304435">
        <id>Q5JX71</id>
        <label>FAM209A</label>
    </interactant>
    <organismsDiffer>false</organismsDiffer>
    <experiments>3</experiments>
</comment>
<comment type="interaction">
    <interactant intactId="EBI-10243654">
        <id>Q5BVD1</id>
    </interactant>
    <interactant intactId="EBI-2833872">
        <id>O15552</id>
        <label>FFAR2</label>
    </interactant>
    <organismsDiffer>false</organismsDiffer>
    <experiments>3</experiments>
</comment>
<comment type="interaction">
    <interactant intactId="EBI-10243654">
        <id>Q5BVD1</id>
    </interactant>
    <interactant intactId="EBI-12142257">
        <id>Q8TBE3</id>
        <label>FNDC9</label>
    </interactant>
    <organismsDiffer>false</organismsDiffer>
    <experiments>3</experiments>
</comment>
<comment type="interaction">
    <interactant intactId="EBI-10243654">
        <id>Q5BVD1</id>
    </interactant>
    <interactant intactId="EBI-13060980">
        <id>Q04609-8</id>
        <label>FOLH1</label>
    </interactant>
    <organismsDiffer>false</organismsDiffer>
    <experiments>3</experiments>
</comment>
<comment type="interaction">
    <interactant intactId="EBI-10243654">
        <id>Q5BVD1</id>
    </interactant>
    <interactant intactId="EBI-12839380">
        <id>P21217</id>
        <label>FUT3</label>
    </interactant>
    <organismsDiffer>false</organismsDiffer>
    <experiments>3</experiments>
</comment>
<comment type="interaction">
    <interactant intactId="EBI-10243654">
        <id>Q5BVD1</id>
    </interactant>
    <interactant intactId="EBI-17458373">
        <id>P48165</id>
        <label>GJA8</label>
    </interactant>
    <organismsDiffer>false</organismsDiffer>
    <experiments>3</experiments>
</comment>
<comment type="interaction">
    <interactant intactId="EBI-10243654">
        <id>Q5BVD1</id>
    </interactant>
    <interactant intactId="EBI-17565645">
        <id>P08034</id>
        <label>GJB1</label>
    </interactant>
    <organismsDiffer>false</organismsDiffer>
    <experiments>3</experiments>
</comment>
<comment type="interaction">
    <interactant intactId="EBI-10243654">
        <id>Q5BVD1</id>
    </interactant>
    <interactant intactId="EBI-3917143">
        <id>Q5T7V8</id>
        <label>GORAB</label>
    </interactant>
    <organismsDiffer>false</organismsDiffer>
    <experiments>3</experiments>
</comment>
<comment type="interaction">
    <interactant intactId="EBI-10243654">
        <id>Q5BVD1</id>
    </interactant>
    <interactant intactId="EBI-2867874">
        <id>Q9UM44</id>
        <label>HHLA2</label>
    </interactant>
    <organismsDiffer>false</organismsDiffer>
    <experiments>3</experiments>
</comment>
<comment type="interaction">
    <interactant intactId="EBI-10243654">
        <id>Q5BVD1</id>
    </interactant>
    <interactant intactId="EBI-18053395">
        <id>Q7Z5P4</id>
        <label>HSD17B13</label>
    </interactant>
    <organismsDiffer>false</organismsDiffer>
    <experiments>3</experiments>
</comment>
<comment type="interaction">
    <interactant intactId="EBI-10243654">
        <id>Q5BVD1</id>
    </interactant>
    <interactant intactId="EBI-746662">
        <id>P23276</id>
        <label>KEL</label>
    </interactant>
    <organismsDiffer>false</organismsDiffer>
    <experiments>3</experiments>
</comment>
<comment type="interaction">
    <interactant intactId="EBI-10243654">
        <id>Q5BVD1</id>
    </interactant>
    <interactant intactId="EBI-8632435">
        <id>P43628</id>
        <label>KIR2DL3</label>
    </interactant>
    <organismsDiffer>false</organismsDiffer>
    <experiments>3</experiments>
</comment>
<comment type="interaction">
    <interactant intactId="EBI-10243654">
        <id>Q5BVD1</id>
    </interactant>
    <interactant intactId="EBI-9018187">
        <id>P26715</id>
        <label>KLRC1</label>
    </interactant>
    <organismsDiffer>false</organismsDiffer>
    <experiments>3</experiments>
</comment>
<comment type="interaction">
    <interactant intactId="EBI-10243654">
        <id>Q5BVD1</id>
    </interactant>
    <interactant intactId="EBI-17490413">
        <id>A8MZ59</id>
        <label>LEUTX</label>
    </interactant>
    <organismsDiffer>false</organismsDiffer>
    <experiments>3</experiments>
</comment>
<comment type="interaction">
    <interactant intactId="EBI-10243654">
        <id>Q5BVD1</id>
    </interactant>
    <interactant intactId="EBI-2820517">
        <id>Q8TAF8</id>
        <label>LHFPL5</label>
    </interactant>
    <organismsDiffer>false</organismsDiffer>
    <experiments>3</experiments>
</comment>
<comment type="interaction">
    <interactant intactId="EBI-10243654">
        <id>Q5BVD1</id>
    </interactant>
    <interactant intactId="EBI-11304917">
        <id>Q8N386</id>
        <label>LRRC25</label>
    </interactant>
    <organismsDiffer>false</organismsDiffer>
    <experiments>3</experiments>
</comment>
<comment type="interaction">
    <interactant intactId="EBI-10243654">
        <id>Q5BVD1</id>
    </interactant>
    <interactant intactId="EBI-11956541">
        <id>Q9GZY8-5</id>
        <label>MFF</label>
    </interactant>
    <organismsDiffer>false</organismsDiffer>
    <experiments>3</experiments>
</comment>
<comment type="interaction">
    <interactant intactId="EBI-10243654">
        <id>Q5BVD1</id>
    </interactant>
    <interactant intactId="EBI-11324706">
        <id>Q99735</id>
        <label>MGST2</label>
    </interactant>
    <organismsDiffer>false</organismsDiffer>
    <experiments>3</experiments>
</comment>
<comment type="interaction">
    <interactant intactId="EBI-10243654">
        <id>Q5BVD1</id>
    </interactant>
    <interactant intactId="EBI-724754">
        <id>O14880</id>
        <label>MGST3</label>
    </interactant>
    <organismsDiffer>false</organismsDiffer>
    <experiments>3</experiments>
</comment>
<comment type="interaction">
    <interactant intactId="EBI-10243654">
        <id>Q5BVD1</id>
    </interactant>
    <interactant intactId="EBI-17958655">
        <id>Q96LB0</id>
        <label>MRGPRX3</label>
    </interactant>
    <organismsDiffer>false</organismsDiffer>
    <experiments>3</experiments>
</comment>
<comment type="interaction">
    <interactant intactId="EBI-10243654">
        <id>Q5BVD1</id>
    </interactant>
    <interactant intactId="EBI-17263240">
        <id>P15941-11</id>
        <label>MUC1</label>
    </interactant>
    <organismsDiffer>false</organismsDiffer>
    <experiments>3</experiments>
</comment>
<comment type="interaction">
    <interactant intactId="EBI-10243654">
        <id>Q5BVD1</id>
    </interactant>
    <interactant intactId="EBI-14061804">
        <id>Q68D85</id>
        <label>NCR3LG1</label>
    </interactant>
    <organismsDiffer>false</organismsDiffer>
    <experiments>3</experiments>
</comment>
<comment type="interaction">
    <interactant intactId="EBI-10243654">
        <id>Q5BVD1</id>
    </interactant>
    <interactant intactId="EBI-10969203">
        <id>O14524-2</id>
        <label>NEMP1</label>
    </interactant>
    <organismsDiffer>false</organismsDiffer>
    <experiments>3</experiments>
</comment>
<comment type="interaction">
    <interactant intactId="EBI-10243654">
        <id>Q5BVD1</id>
    </interactant>
    <interactant intactId="EBI-748927">
        <id>Q9NQX5</id>
        <label>NPDC1</label>
    </interactant>
    <organismsDiffer>false</organismsDiffer>
    <experiments>3</experiments>
</comment>
<comment type="interaction">
    <interactant intactId="EBI-10243654">
        <id>Q5BVD1</id>
    </interactant>
    <interactant intactId="EBI-7101695">
        <id>Q9Y328</id>
        <label>NSG2</label>
    </interactant>
    <organismsDiffer>false</organismsDiffer>
    <experiments>3</experiments>
</comment>
<comment type="interaction">
    <interactant intactId="EBI-10243654">
        <id>Q5BVD1</id>
    </interactant>
    <interactant intactId="EBI-3919694">
        <id>P15151</id>
        <label>PVR</label>
    </interactant>
    <organismsDiffer>false</organismsDiffer>
    <experiments>3</experiments>
</comment>
<comment type="interaction">
    <interactant intactId="EBI-10243654">
        <id>Q5BVD1</id>
    </interactant>
    <interactant intactId="EBI-13336719">
        <id>Q9NXS2-3</id>
        <label>QPCTL</label>
    </interactant>
    <organismsDiffer>false</organismsDiffer>
    <experiments>3</experiments>
</comment>
<comment type="interaction">
    <interactant intactId="EBI-10243654">
        <id>Q5BVD1</id>
    </interactant>
    <interactant intactId="EBI-7545786">
        <id>Q6NUK4</id>
        <label>REEP3</label>
    </interactant>
    <organismsDiffer>false</organismsDiffer>
    <experiments>3</experiments>
</comment>
<comment type="interaction">
    <interactant intactId="EBI-10243654">
        <id>Q5BVD1</id>
    </interactant>
    <interactant intactId="EBI-36513929">
        <id>Q9ULK6-3</id>
        <label>RNF150</label>
    </interactant>
    <organismsDiffer>false</organismsDiffer>
    <experiments>3</experiments>
</comment>
<comment type="interaction">
    <interactant intactId="EBI-10243654">
        <id>Q5BVD1</id>
    </interactant>
    <interactant intactId="EBI-3920694">
        <id>Q9NR31</id>
        <label>SAR1A</label>
    </interactant>
    <organismsDiffer>false</organismsDiffer>
    <experiments>3</experiments>
</comment>
<comment type="interaction">
    <interactant intactId="EBI-10243654">
        <id>Q5BVD1</id>
    </interactant>
    <interactant intactId="EBI-347996">
        <id>O43765</id>
        <label>SGTA</label>
    </interactant>
    <organismsDiffer>false</organismsDiffer>
    <experiments>6</experiments>
</comment>
<comment type="interaction">
    <interactant intactId="EBI-10243654">
        <id>Q5BVD1</id>
    </interactant>
    <interactant intactId="EBI-18052611">
        <id>Q8N7X8</id>
        <label>SIGLECL1</label>
    </interactant>
    <organismsDiffer>false</organismsDiffer>
    <experiments>4</experiments>
</comment>
<comment type="interaction">
    <interactant intactId="EBI-10243654">
        <id>Q5BVD1</id>
    </interactant>
    <interactant intactId="EBI-18114847">
        <id>Q12908</id>
        <label>SLC10A2</label>
    </interactant>
    <organismsDiffer>false</organismsDiffer>
    <experiments>3</experiments>
</comment>
<comment type="interaction">
    <interactant intactId="EBI-10243654">
        <id>Q5BVD1</id>
    </interactant>
    <interactant intactId="EBI-12898013">
        <id>Q9NP94</id>
        <label>SLC39A2</label>
    </interactant>
    <organismsDiffer>false</organismsDiffer>
    <experiments>3</experiments>
</comment>
<comment type="interaction">
    <interactant intactId="EBI-10243654">
        <id>Q5BVD1</id>
    </interactant>
    <interactant intactId="EBI-2836158">
        <id>Q9H741</id>
        <label>SPRING1</label>
    </interactant>
    <organismsDiffer>false</organismsDiffer>
    <experiments>3</experiments>
</comment>
<comment type="interaction">
    <interactant intactId="EBI-10243654">
        <id>Q5BVD1</id>
    </interactant>
    <interactant intactId="EBI-12947081">
        <id>Q8NDV1</id>
        <label>ST6GALNAC3</label>
    </interactant>
    <organismsDiffer>false</organismsDiffer>
    <experiments>3</experiments>
</comment>
<comment type="interaction">
    <interactant intactId="EBI-10243654">
        <id>Q5BVD1</id>
    </interactant>
    <interactant intactId="EBI-1211440">
        <id>P27105</id>
        <label>STOM</label>
    </interactant>
    <organismsDiffer>false</organismsDiffer>
    <experiments>3</experiments>
</comment>
<comment type="interaction">
    <interactant intactId="EBI-10243654">
        <id>Q5BVD1</id>
    </interactant>
    <interactant intactId="EBI-7131783">
        <id>Q8N205</id>
        <label>SYNE4</label>
    </interactant>
    <organismsDiffer>false</organismsDiffer>
    <experiments>3</experiments>
</comment>
<comment type="interaction">
    <interactant intactId="EBI-10243654">
        <id>Q5BVD1</id>
    </interactant>
    <interactant intactId="EBI-6268651">
        <id>Q9NPL8</id>
        <label>TIMMDC1</label>
    </interactant>
    <organismsDiffer>false</organismsDiffer>
    <experiments>3</experiments>
</comment>
<comment type="interaction">
    <interactant intactId="EBI-10243654">
        <id>Q5BVD1</id>
    </interactant>
    <interactant intactId="EBI-11724423">
        <id>Q7Z7N9</id>
        <label>TMEM179B</label>
    </interactant>
    <organismsDiffer>false</organismsDiffer>
    <experiments>3</experiments>
</comment>
<comment type="interaction">
    <interactant intactId="EBI-10243654">
        <id>Q5BVD1</id>
    </interactant>
    <interactant intactId="EBI-10982110">
        <id>Q96Q45-2</id>
        <label>TMEM237</label>
    </interactant>
    <organismsDiffer>false</organismsDiffer>
    <experiments>3</experiments>
</comment>
<comment type="interaction">
    <interactant intactId="EBI-10243654">
        <id>Q5BVD1</id>
    </interactant>
    <interactant intactId="EBI-3923061">
        <id>Q96B21</id>
        <label>TMEM45B</label>
    </interactant>
    <organismsDiffer>false</organismsDiffer>
    <experiments>3</experiments>
</comment>
<comment type="interaction">
    <interactant intactId="EBI-10243654">
        <id>Q5BVD1</id>
    </interactant>
    <interactant intactId="EBI-18178701">
        <id>Q4KMG9</id>
        <label>TMEM52B</label>
    </interactant>
    <organismsDiffer>false</organismsDiffer>
    <experiments>3</experiments>
</comment>
<comment type="interaction">
    <interactant intactId="EBI-10243654">
        <id>Q5BVD1</id>
    </interactant>
    <interactant intactId="EBI-11742770">
        <id>Q96HE8</id>
        <label>TMEM80</label>
    </interactant>
    <organismsDiffer>false</organismsDiffer>
    <experiments>3</experiments>
</comment>
<comment type="interaction">
    <interactant intactId="EBI-10243654">
        <id>Q5BVD1</id>
    </interactant>
    <interactant intactId="EBI-12345267">
        <id>O15393-2</id>
        <label>TMPRSS2</label>
    </interactant>
    <organismsDiffer>false</organismsDiffer>
    <experiments>5</experiments>
</comment>
<comment type="interaction">
    <interactant intactId="EBI-10243654">
        <id>Q5BVD1</id>
    </interactant>
    <interactant intactId="EBI-6447886">
        <id>Q9Y320</id>
        <label>TMX2</label>
    </interactant>
    <organismsDiffer>false</organismsDiffer>
    <experiments>4</experiments>
</comment>
<comment type="interaction">
    <interactant intactId="EBI-10243654">
        <id>Q5BVD1</id>
    </interactant>
    <interactant intactId="EBI-10179682">
        <id>O00526</id>
        <label>UPK2</label>
    </interactant>
    <organismsDiffer>false</organismsDiffer>
    <experiments>3</experiments>
</comment>
<comment type="interaction">
    <interactant intactId="EBI-10243654">
        <id>Q5BVD1</id>
    </interactant>
    <interactant intactId="EBI-949772">
        <id>Q9ULT6</id>
        <label>ZNRF3</label>
    </interactant>
    <organismsDiffer>false</organismsDiffer>
    <experiments>3</experiments>
</comment>
<comment type="subcellular location">
    <subcellularLocation>
        <location evidence="9">Endoplasmic reticulum</location>
    </subcellularLocation>
    <subcellularLocation>
        <location evidence="6">Cell membrane</location>
        <topology evidence="9">Single-pass type I membrane protein</topology>
    </subcellularLocation>
</comment>
<comment type="alternative products">
    <event type="alternative splicing"/>
    <isoform>
        <id>Q5BVD1-1</id>
        <name>1</name>
        <sequence type="displayed"/>
    </isoform>
    <isoform>
        <id>Q5BVD1-2</id>
        <name>2</name>
        <sequence type="described" ref="VSP_036120"/>
    </isoform>
    <isoform>
        <id>Q5BVD1-3</id>
        <name>3</name>
        <sequence type="described" ref="VSP_036121"/>
    </isoform>
</comment>
<comment type="tissue specificity">
    <text evidence="6">Detected predominantly in the skin, with strongest expression in the inner root sheath of the hair follicle.</text>
</comment>
<comment type="induction">
    <text evidence="5">Up-regulated following treatment with 12-O-tetradecanoylphorbol-13-acetate (TPA) in the pancreatic cancer cell line HPAF-II. The up-regulation by TPA is triggered at the promoter level.</text>
</comment>
<comment type="disease" evidence="6 7">
    <disease id="DI-06567">
        <name>Hypotrichosis 15</name>
        <acronym>HYPT15</acronym>
        <description>A form of hypotrichosis, a condition characterized by the presence of less than the normal amount of hair and abnormal hair follicles and shafts, which are thin and atrophic. The extent of scalp and body hair involvement can be very variable, within as well as between families. HYPT15 is an autosomal recessive form characterized by sparse to absent scalp and body hair. Eyebrows and eyelashes may be sparse or absent as well.</description>
        <dbReference type="MIM" id="620177"/>
    </disease>
    <text>The disease is caused by variants affecting the gene represented in this entry.</text>
</comment>
<comment type="sequence caution" evidence="9">
    <conflict type="erroneous initiation">
        <sequence resource="EMBL-CDS" id="AAH17064"/>
    </conflict>
    <text>Truncated N-terminus.</text>
</comment>
<comment type="sequence caution" evidence="9">
    <conflict type="frameshift">
        <sequence resource="EMBL-CDS" id="BAB15569"/>
    </conflict>
</comment>
<comment type="sequence caution" evidence="9">
    <conflict type="erroneous initiation">
        <sequence resource="EMBL-CDS" id="BAG60364"/>
    </conflict>
    <text>Truncated N-terminus.</text>
</comment>
<reference key="1">
    <citation type="journal article" date="2005" name="Biochem. Biophys. Res. Commun.">
        <title>Identification and in silico characterization of a novel gene: TPA induced trans-membrane protein.</title>
        <authorList>
            <person name="Chan C.-Y."/>
            <person name="Salabat M.R."/>
            <person name="Ding X.-Z."/>
            <person name="Kelly D.L."/>
            <person name="Talamonti M.S."/>
            <person name="Bell R.H. Jr."/>
            <person name="Adrian T.E."/>
        </authorList>
    </citation>
    <scope>NUCLEOTIDE SEQUENCE [MRNA] (ISOFORM 1)</scope>
    <scope>INDUCTION</scope>
    <scope>VARIANT SER-144</scope>
    <source>
        <tissue>Colon</tissue>
    </source>
</reference>
<reference key="2">
    <citation type="journal article" date="2004" name="Nat. Genet.">
        <title>Complete sequencing and characterization of 21,243 full-length human cDNAs.</title>
        <authorList>
            <person name="Ota T."/>
            <person name="Suzuki Y."/>
            <person name="Nishikawa T."/>
            <person name="Otsuki T."/>
            <person name="Sugiyama T."/>
            <person name="Irie R."/>
            <person name="Wakamatsu A."/>
            <person name="Hayashi K."/>
            <person name="Sato H."/>
            <person name="Nagai K."/>
            <person name="Kimura K."/>
            <person name="Makita H."/>
            <person name="Sekine M."/>
            <person name="Obayashi M."/>
            <person name="Nishi T."/>
            <person name="Shibahara T."/>
            <person name="Tanaka T."/>
            <person name="Ishii S."/>
            <person name="Yamamoto J."/>
            <person name="Saito K."/>
            <person name="Kawai Y."/>
            <person name="Isono Y."/>
            <person name="Nakamura Y."/>
            <person name="Nagahari K."/>
            <person name="Murakami K."/>
            <person name="Yasuda T."/>
            <person name="Iwayanagi T."/>
            <person name="Wagatsuma M."/>
            <person name="Shiratori A."/>
            <person name="Sudo H."/>
            <person name="Hosoiri T."/>
            <person name="Kaku Y."/>
            <person name="Kodaira H."/>
            <person name="Kondo H."/>
            <person name="Sugawara M."/>
            <person name="Takahashi M."/>
            <person name="Kanda K."/>
            <person name="Yokoi T."/>
            <person name="Furuya T."/>
            <person name="Kikkawa E."/>
            <person name="Omura Y."/>
            <person name="Abe K."/>
            <person name="Kamihara K."/>
            <person name="Katsuta N."/>
            <person name="Sato K."/>
            <person name="Tanikawa M."/>
            <person name="Yamazaki M."/>
            <person name="Ninomiya K."/>
            <person name="Ishibashi T."/>
            <person name="Yamashita H."/>
            <person name="Murakawa K."/>
            <person name="Fujimori K."/>
            <person name="Tanai H."/>
            <person name="Kimata M."/>
            <person name="Watanabe M."/>
            <person name="Hiraoka S."/>
            <person name="Chiba Y."/>
            <person name="Ishida S."/>
            <person name="Ono Y."/>
            <person name="Takiguchi S."/>
            <person name="Watanabe S."/>
            <person name="Yosida M."/>
            <person name="Hotuta T."/>
            <person name="Kusano J."/>
            <person name="Kanehori K."/>
            <person name="Takahashi-Fujii A."/>
            <person name="Hara H."/>
            <person name="Tanase T.-O."/>
            <person name="Nomura Y."/>
            <person name="Togiya S."/>
            <person name="Komai F."/>
            <person name="Hara R."/>
            <person name="Takeuchi K."/>
            <person name="Arita M."/>
            <person name="Imose N."/>
            <person name="Musashino K."/>
            <person name="Yuuki H."/>
            <person name="Oshima A."/>
            <person name="Sasaki N."/>
            <person name="Aotsuka S."/>
            <person name="Yoshikawa Y."/>
            <person name="Matsunawa H."/>
            <person name="Ichihara T."/>
            <person name="Shiohata N."/>
            <person name="Sano S."/>
            <person name="Moriya S."/>
            <person name="Momiyama H."/>
            <person name="Satoh N."/>
            <person name="Takami S."/>
            <person name="Terashima Y."/>
            <person name="Suzuki O."/>
            <person name="Nakagawa S."/>
            <person name="Senoh A."/>
            <person name="Mizoguchi H."/>
            <person name="Goto Y."/>
            <person name="Shimizu F."/>
            <person name="Wakebe H."/>
            <person name="Hishigaki H."/>
            <person name="Watanabe T."/>
            <person name="Sugiyama A."/>
            <person name="Takemoto M."/>
            <person name="Kawakami B."/>
            <person name="Yamazaki M."/>
            <person name="Watanabe K."/>
            <person name="Kumagai A."/>
            <person name="Itakura S."/>
            <person name="Fukuzumi Y."/>
            <person name="Fujimori Y."/>
            <person name="Komiyama M."/>
            <person name="Tashiro H."/>
            <person name="Tanigami A."/>
            <person name="Fujiwara T."/>
            <person name="Ono T."/>
            <person name="Yamada K."/>
            <person name="Fujii Y."/>
            <person name="Ozaki K."/>
            <person name="Hirao M."/>
            <person name="Ohmori Y."/>
            <person name="Kawabata A."/>
            <person name="Hikiji T."/>
            <person name="Kobatake N."/>
            <person name="Inagaki H."/>
            <person name="Ikema Y."/>
            <person name="Okamoto S."/>
            <person name="Okitani R."/>
            <person name="Kawakami T."/>
            <person name="Noguchi S."/>
            <person name="Itoh T."/>
            <person name="Shigeta K."/>
            <person name="Senba T."/>
            <person name="Matsumura K."/>
            <person name="Nakajima Y."/>
            <person name="Mizuno T."/>
            <person name="Morinaga M."/>
            <person name="Sasaki M."/>
            <person name="Togashi T."/>
            <person name="Oyama M."/>
            <person name="Hata H."/>
            <person name="Watanabe M."/>
            <person name="Komatsu T."/>
            <person name="Mizushima-Sugano J."/>
            <person name="Satoh T."/>
            <person name="Shirai Y."/>
            <person name="Takahashi Y."/>
            <person name="Nakagawa K."/>
            <person name="Okumura K."/>
            <person name="Nagase T."/>
            <person name="Nomura N."/>
            <person name="Kikuchi H."/>
            <person name="Masuho Y."/>
            <person name="Yamashita R."/>
            <person name="Nakai K."/>
            <person name="Yada T."/>
            <person name="Nakamura Y."/>
            <person name="Ohara O."/>
            <person name="Isogai T."/>
            <person name="Sugano S."/>
        </authorList>
    </citation>
    <scope>NUCLEOTIDE SEQUENCE [LARGE SCALE MRNA] (ISOFORMS 1 AND 2)</scope>
    <scope>NUCLEOTIDE SEQUENCE [LARGE SCALE MRNA] OF 11-217 (ISOFORM 3)</scope>
    <scope>VARIANT SER-144</scope>
    <source>
        <tissue>Lung</tissue>
        <tissue>Thymus</tissue>
    </source>
</reference>
<reference key="3">
    <citation type="journal article" date="2006" name="Nature">
        <title>The DNA sequence, annotation and analysis of human chromosome 3.</title>
        <authorList>
            <person name="Muzny D.M."/>
            <person name="Scherer S.E."/>
            <person name="Kaul R."/>
            <person name="Wang J."/>
            <person name="Yu J."/>
            <person name="Sudbrak R."/>
            <person name="Buhay C.J."/>
            <person name="Chen R."/>
            <person name="Cree A."/>
            <person name="Ding Y."/>
            <person name="Dugan-Rocha S."/>
            <person name="Gill R."/>
            <person name="Gunaratne P."/>
            <person name="Harris R.A."/>
            <person name="Hawes A.C."/>
            <person name="Hernandez J."/>
            <person name="Hodgson A.V."/>
            <person name="Hume J."/>
            <person name="Jackson A."/>
            <person name="Khan Z.M."/>
            <person name="Kovar-Smith C."/>
            <person name="Lewis L.R."/>
            <person name="Lozado R.J."/>
            <person name="Metzker M.L."/>
            <person name="Milosavljevic A."/>
            <person name="Miner G.R."/>
            <person name="Morgan M.B."/>
            <person name="Nazareth L.V."/>
            <person name="Scott G."/>
            <person name="Sodergren E."/>
            <person name="Song X.-Z."/>
            <person name="Steffen D."/>
            <person name="Wei S."/>
            <person name="Wheeler D.A."/>
            <person name="Wright M.W."/>
            <person name="Worley K.C."/>
            <person name="Yuan Y."/>
            <person name="Zhang Z."/>
            <person name="Adams C.Q."/>
            <person name="Ansari-Lari M.A."/>
            <person name="Ayele M."/>
            <person name="Brown M.J."/>
            <person name="Chen G."/>
            <person name="Chen Z."/>
            <person name="Clendenning J."/>
            <person name="Clerc-Blankenburg K.P."/>
            <person name="Chen R."/>
            <person name="Chen Z."/>
            <person name="Davis C."/>
            <person name="Delgado O."/>
            <person name="Dinh H.H."/>
            <person name="Dong W."/>
            <person name="Draper H."/>
            <person name="Ernst S."/>
            <person name="Fu G."/>
            <person name="Gonzalez-Garay M.L."/>
            <person name="Garcia D.K."/>
            <person name="Gillett W."/>
            <person name="Gu J."/>
            <person name="Hao B."/>
            <person name="Haugen E."/>
            <person name="Havlak P."/>
            <person name="He X."/>
            <person name="Hennig S."/>
            <person name="Hu S."/>
            <person name="Huang W."/>
            <person name="Jackson L.R."/>
            <person name="Jacob L.S."/>
            <person name="Kelly S.H."/>
            <person name="Kube M."/>
            <person name="Levy R."/>
            <person name="Li Z."/>
            <person name="Liu B."/>
            <person name="Liu J."/>
            <person name="Liu W."/>
            <person name="Lu J."/>
            <person name="Maheshwari M."/>
            <person name="Nguyen B.-V."/>
            <person name="Okwuonu G.O."/>
            <person name="Palmeiri A."/>
            <person name="Pasternak S."/>
            <person name="Perez L.M."/>
            <person name="Phelps K.A."/>
            <person name="Plopper F.J."/>
            <person name="Qiang B."/>
            <person name="Raymond C."/>
            <person name="Rodriguez R."/>
            <person name="Saenphimmachak C."/>
            <person name="Santibanez J."/>
            <person name="Shen H."/>
            <person name="Shen Y."/>
            <person name="Subramanian S."/>
            <person name="Tabor P.E."/>
            <person name="Verduzco D."/>
            <person name="Waldron L."/>
            <person name="Wang J."/>
            <person name="Wang J."/>
            <person name="Wang Q."/>
            <person name="Williams G.A."/>
            <person name="Wong G.K.-S."/>
            <person name="Yao Z."/>
            <person name="Zhang J."/>
            <person name="Zhang X."/>
            <person name="Zhao G."/>
            <person name="Zhou J."/>
            <person name="Zhou Y."/>
            <person name="Nelson D."/>
            <person name="Lehrach H."/>
            <person name="Reinhardt R."/>
            <person name="Naylor S.L."/>
            <person name="Yang H."/>
            <person name="Olson M."/>
            <person name="Weinstock G."/>
            <person name="Gibbs R.A."/>
        </authorList>
    </citation>
    <scope>NUCLEOTIDE SEQUENCE [LARGE SCALE GENOMIC DNA]</scope>
</reference>
<reference key="4">
    <citation type="journal article" date="2004" name="Genome Res.">
        <title>The status, quality, and expansion of the NIH full-length cDNA project: the Mammalian Gene Collection (MGC).</title>
        <authorList>
            <consortium name="The MGC Project Team"/>
        </authorList>
    </citation>
    <scope>NUCLEOTIDE SEQUENCE [LARGE SCALE MRNA] (ISOFORM 1)</scope>
    <scope>VARIANT SER-144</scope>
    <source>
        <tissue>Lung</tissue>
    </source>
</reference>
<reference key="5">
    <citation type="journal article" date="2020" name="Genet. Med.">
        <title>Loss-of-function variants in C3ORF52 result in localized autosomal recessive hypotrichosis.</title>
        <authorList>
            <person name="Malki L."/>
            <person name="Sarig O."/>
            <person name="Cesarato N."/>
            <person name="Mohamad J."/>
            <person name="Canter T."/>
            <person name="Assaf S."/>
            <person name="Pavlovsky M."/>
            <person name="Vodo D."/>
            <person name="Anis Y."/>
            <person name="Bihari O."/>
            <person name="Malovitski K."/>
            <person name="Gat A."/>
            <person name="Thiele H."/>
            <person name="White B.E.P."/>
            <person name="Samuelov L."/>
            <person name="Nanda A."/>
            <person name="Paller A.S."/>
            <person name="Betz R.C."/>
            <person name="Sprecher E."/>
        </authorList>
    </citation>
    <scope>VARIANTS HYPT15 12-GLU--GLU-217 DEL AND 164-TYR--GLU-217 DEL</scope>
    <scope>TISSUE SPECIFICITY</scope>
    <scope>INVOLVEMENT IN HYPT15</scope>
    <scope>SUBCELLULAR LOCATION</scope>
    <scope>INTERACTION WITH LIPH</scope>
    <scope>CHARACTERIZATION OF VARIANTS HYPT15 12-GLU--GLU-217 DEL AND 164-TYR--GLU-217 DEL</scope>
</reference>
<reference key="6">
    <citation type="journal article" date="2021" name="Eur. J. Dermatol.">
        <title>A novel homozygous frameshift variant in the C3orf52 gene underlying isolated hair loss in a consanguineous family.</title>
        <authorList>
            <person name="Shah K."/>
            <person name="Basit S."/>
            <person name="Ali G."/>
            <person name="Ramzan K."/>
            <person name="Ansar M."/>
            <person name="Ahmad W."/>
        </authorList>
    </citation>
    <scope>INVOLVEMENT IN HYPT15</scope>
</reference>
<sequence length="217" mass="24295">MDLAQPSQPVDELELSVLERQPEENTPLNGADKVFPSLDEEVPPAEANKESPWSSCNKNVVGRCKLWMIITSIFLGVITVIIIGLCLAAVTYVDEDENEILELSSNKTFFIMLKIPEECVAEEELPHLLTERLTDVYSTSPSLGRYFTSVEIVDFSGENATVTYDLQFGVPSDDENFMKYMMSEELVLGILLQDFRDQNIPGCESLGLDPTSLLLYE</sequence>
<gene>
    <name type="primary">TTMP</name>
    <name type="synonym">C3orf52</name>
</gene>
<evidence type="ECO:0000255" key="1"/>
<evidence type="ECO:0000256" key="2">
    <source>
        <dbReference type="SAM" id="MobiDB-lite"/>
    </source>
</evidence>
<evidence type="ECO:0000269" key="3">
    <source>
    </source>
</evidence>
<evidence type="ECO:0000269" key="4">
    <source>
    </source>
</evidence>
<evidence type="ECO:0000269" key="5">
    <source>
    </source>
</evidence>
<evidence type="ECO:0000269" key="6">
    <source>
    </source>
</evidence>
<evidence type="ECO:0000269" key="7">
    <source>
    </source>
</evidence>
<evidence type="ECO:0000303" key="8">
    <source>
    </source>
</evidence>
<evidence type="ECO:0000305" key="9"/>
<proteinExistence type="evidence at protein level"/>
<keyword id="KW-0025">Alternative splicing</keyword>
<keyword id="KW-1003">Cell membrane</keyword>
<keyword id="KW-0225">Disease variant</keyword>
<keyword id="KW-0256">Endoplasmic reticulum</keyword>
<keyword id="KW-1063">Hypotrichosis</keyword>
<keyword id="KW-0472">Membrane</keyword>
<keyword id="KW-1267">Proteomics identification</keyword>
<keyword id="KW-1185">Reference proteome</keyword>
<keyword id="KW-0812">Transmembrane</keyword>
<keyword id="KW-1133">Transmembrane helix</keyword>
<protein>
    <recommendedName>
        <fullName>TPA-induced transmembrane protein</fullName>
    </recommendedName>
</protein>